<keyword id="KW-0044">Antibiotic</keyword>
<keyword id="KW-0929">Antimicrobial</keyword>
<keyword id="KW-0145">Chemotaxis</keyword>
<keyword id="KW-0903">Direct protein sequencing</keyword>
<keyword id="KW-1015">Disulfide bond</keyword>
<keyword id="KW-0325">Glycoprotein</keyword>
<keyword id="KW-0358">Heparin-binding</keyword>
<keyword id="KW-0472">Membrane</keyword>
<keyword id="KW-1185">Reference proteome</keyword>
<keyword id="KW-0721">Serine protease homolog</keyword>
<keyword id="KW-0732">Signal</keyword>
<keyword id="KW-0865">Zymogen</keyword>
<feature type="signal peptide" evidence="1">
    <location>
        <begin position="1"/>
        <end position="19"/>
    </location>
</feature>
<feature type="propeptide" id="PRO_0000435374" evidence="6">
    <location>
        <begin position="20"/>
        <end position="26"/>
    </location>
</feature>
<feature type="chain" id="PRO_0000088679" description="Azurocidin" evidence="3">
    <location>
        <begin position="27"/>
        <end position="245"/>
    </location>
</feature>
<feature type="propeptide" id="PRO_0000435375" evidence="3">
    <location>
        <begin position="245"/>
        <end position="246"/>
    </location>
</feature>
<feature type="domain" description="Peptidase S1" evidence="2">
    <location>
        <begin position="27"/>
        <end position="242"/>
    </location>
</feature>
<feature type="glycosylation site" description="N-linked (GlcNAc...) asparagine" evidence="4">
    <location>
        <position position="139"/>
    </location>
</feature>
<feature type="glycosylation site" description="N-linked (GlcNAc...) asparagine" evidence="4">
    <location>
        <position position="170"/>
    </location>
</feature>
<feature type="disulfide bond" evidence="4">
    <location>
        <begin position="52"/>
        <end position="68"/>
    </location>
</feature>
<feature type="disulfide bond" evidence="4">
    <location>
        <begin position="148"/>
        <end position="205"/>
    </location>
</feature>
<feature type="disulfide bond" evidence="4">
    <location>
        <begin position="178"/>
        <end position="184"/>
    </location>
</feature>
<evidence type="ECO:0000250" key="1">
    <source>
        <dbReference type="UniProtKB" id="P20160"/>
    </source>
</evidence>
<evidence type="ECO:0000255" key="2">
    <source>
        <dbReference type="PROSITE-ProRule" id="PRU00274"/>
    </source>
</evidence>
<evidence type="ECO:0000269" key="3">
    <source>
    </source>
</evidence>
<evidence type="ECO:0000269" key="4">
    <source>
    </source>
</evidence>
<evidence type="ECO:0000303" key="5">
    <source>
    </source>
</evidence>
<evidence type="ECO:0000305" key="6">
    <source>
    </source>
</evidence>
<reference key="1">
    <citation type="submission" date="2011-09" db="EMBL/GenBank/DDBJ databases">
        <authorList>
            <consortium name="Porcine genome sequencing project"/>
        </authorList>
    </citation>
    <scope>NUCLEOTIDE SEQUENCE [LARGE SCALE GENOMIC DNA]</scope>
</reference>
<reference key="2">
    <citation type="journal article" date="1991" name="Eur. J. Biochem.">
        <title>Covalent structure of two novel neutrophile leucocyte-derived proteins of porcine and human origin. Neutrophile elastase homologues with strong monocyte and fibroblast chemotactic activities.</title>
        <authorList>
            <person name="Flodgaard H."/>
            <person name="Oestergaard E."/>
            <person name="Bayne S."/>
            <person name="Svendsen A."/>
            <person name="Thomsen J."/>
            <person name="Engels M."/>
            <person name="Wollmer A."/>
        </authorList>
    </citation>
    <scope>PROTEIN SEQUENCE OF 27-245</scope>
    <scope>IDENTIFICATION BY MASS SPECTROMETRY</scope>
    <scope>FUNCTION</scope>
    <source>
        <tissue>Neutrophil</tissue>
    </source>
</reference>
<reference key="3">
    <citation type="journal article" date="1990" name="Biomed. Environ. Mass Spectrom.">
        <title>Strategies for determination of disulphide bridges in proteins using plasma desorption mass spectrometry.</title>
        <authorList>
            <person name="Sorensen H.H."/>
            <person name="Thomsen J."/>
            <person name="Bayne S."/>
            <person name="Hojrup P."/>
            <person name="Roepstorff P."/>
        </authorList>
    </citation>
    <scope>PARTIAL PROTEIN SEQUENCE</scope>
    <scope>DISULFIDE BONDS</scope>
    <scope>GLYCOSYLATION AT ASN-139 AND ASN-170</scope>
    <scope>IDENTIFICATION BY MASS SPECTROMETRY</scope>
</reference>
<protein>
    <recommendedName>
        <fullName evidence="1">Azurocidin</fullName>
    </recommendedName>
    <alternativeName>
        <fullName evidence="1">Cationic antimicrobial protein CAP37</fullName>
    </alternativeName>
    <alternativeName>
        <fullName evidence="5">Heparin-binding protein</fullName>
        <shortName evidence="5">HBP</shortName>
        <shortName evidence="5">pHBP</shortName>
    </alternativeName>
</protein>
<gene>
    <name evidence="1" type="primary">AZU1</name>
</gene>
<comment type="function">
    <text evidence="1 3">This is a neutrophil granule-derived antibacterial and monocyte- and fibroblast-specific chemotactic glycoprotein. Binds heparin.</text>
</comment>
<comment type="subcellular location">
    <subcellularLocation>
        <location evidence="1">Cytoplasmic granule membrane</location>
        <topology evidence="1">Peripheral membrane protein</topology>
        <orientation evidence="1">Cytoplasmic side</orientation>
    </subcellularLocation>
    <text evidence="1">Localizes to azurophil granules of neutrophil granulocytes. Also called primary granules, these specialized lysosomes of the neutrophil formed early during promyelocyte development store antibacterial proteins and peptides.</text>
</comment>
<comment type="similarity">
    <text evidence="2">Belongs to the peptidase S1 family. Elastase subfamily.</text>
</comment>
<sequence length="246" mass="27039">MPALRFLALLASLLATSRVGLATLADIVGGRRAQPQEFPFLASIQKQGRPFCAGALVHPRFVLTAASCFRGKNSGSASVVLGAYDLRQQEQSRQTFSIRSISQNGYDPRQNLNDVLLLQLDREARLTPSVALVPLPPQNATVEAGTNCQVAGWGTQRLRRLFSRFPRVLNVTVTSNPCLPRDMCIGVFSRRGRISQGDRGTPLVCNGLAQGVASFLRRRFRRSSGFFTRVALFRNWIDSVLNNPPA</sequence>
<name>CAP7_PIG</name>
<dbReference type="EMBL" id="JH115037">
    <property type="status" value="NOT_ANNOTATED_CDS"/>
    <property type="molecule type" value="Genomic_DNA"/>
</dbReference>
<dbReference type="PIR" id="S15393">
    <property type="entry name" value="TRPGAZ"/>
</dbReference>
<dbReference type="RefSeq" id="XP_005661477.1">
    <property type="nucleotide sequence ID" value="XM_005661420.3"/>
</dbReference>
<dbReference type="SMR" id="P80015"/>
<dbReference type="FunCoup" id="P80015">
    <property type="interactions" value="8"/>
</dbReference>
<dbReference type="STRING" id="9823.ENSSSCP00000014264"/>
<dbReference type="MEROPS" id="S01.971"/>
<dbReference type="GlyCosmos" id="P80015">
    <property type="glycosylation" value="2 sites, No reported glycans"/>
</dbReference>
<dbReference type="GlyGen" id="P80015">
    <property type="glycosylation" value="2 sites"/>
</dbReference>
<dbReference type="iPTMnet" id="P80015"/>
<dbReference type="PaxDb" id="9823-ENSSSCP00000014264"/>
<dbReference type="PeptideAtlas" id="P80015"/>
<dbReference type="Ensembl" id="ENSSSCT00000014659.3">
    <property type="protein sequence ID" value="ENSSSCP00000014264.3"/>
    <property type="gene ID" value="ENSSSCG00000013415.6"/>
</dbReference>
<dbReference type="Ensembl" id="ENSSSCT00015081055.1">
    <property type="protein sequence ID" value="ENSSSCP00015032789.1"/>
    <property type="gene ID" value="ENSSSCG00015060634.1"/>
</dbReference>
<dbReference type="Ensembl" id="ENSSSCT00025010233.1">
    <property type="protein sequence ID" value="ENSSSCP00025004099.1"/>
    <property type="gene ID" value="ENSSSCG00025007701.1"/>
</dbReference>
<dbReference type="Ensembl" id="ENSSSCT00030023951.1">
    <property type="protein sequence ID" value="ENSSSCP00030010745.1"/>
    <property type="gene ID" value="ENSSSCG00030017322.1"/>
</dbReference>
<dbReference type="Ensembl" id="ENSSSCT00035100473.1">
    <property type="protein sequence ID" value="ENSSSCP00035042669.1"/>
    <property type="gene ID" value="ENSSSCG00035074066.1"/>
</dbReference>
<dbReference type="Ensembl" id="ENSSSCT00040088326.1">
    <property type="protein sequence ID" value="ENSSSCP00040038828.1"/>
    <property type="gene ID" value="ENSSSCG00040064681.1"/>
</dbReference>
<dbReference type="Ensembl" id="ENSSSCT00045052007.1">
    <property type="protein sequence ID" value="ENSSSCP00045036193.1"/>
    <property type="gene ID" value="ENSSSCG00045030459.1"/>
</dbReference>
<dbReference type="Ensembl" id="ENSSSCT00055047471.1">
    <property type="protein sequence ID" value="ENSSSCP00055037890.1"/>
    <property type="gene ID" value="ENSSSCG00055024074.1"/>
</dbReference>
<dbReference type="Ensembl" id="ENSSSCT00065009896.1">
    <property type="protein sequence ID" value="ENSSSCP00065004119.1"/>
    <property type="gene ID" value="ENSSSCG00065007386.1"/>
</dbReference>
<dbReference type="Ensembl" id="ENSSSCT00070053760.1">
    <property type="protein sequence ID" value="ENSSSCP00070045580.1"/>
    <property type="gene ID" value="ENSSSCG00070026803.1"/>
</dbReference>
<dbReference type="Ensembl" id="ENSSSCT00105059728">
    <property type="protein sequence ID" value="ENSSSCP00105042085"/>
    <property type="gene ID" value="ENSSSCG00105031498"/>
</dbReference>
<dbReference type="Ensembl" id="ENSSSCT00110022557">
    <property type="protein sequence ID" value="ENSSSCP00110015305"/>
    <property type="gene ID" value="ENSSSCG00110011727"/>
</dbReference>
<dbReference type="Ensembl" id="ENSSSCT00115018493">
    <property type="protein sequence ID" value="ENSSSCP00115017473"/>
    <property type="gene ID" value="ENSSSCG00115010701"/>
</dbReference>
<dbReference type="Ensembl" id="ENSSSCT00130075474">
    <property type="protein sequence ID" value="ENSSSCP00130054295"/>
    <property type="gene ID" value="ENSSSCG00130038730"/>
</dbReference>
<dbReference type="GeneID" id="100522363"/>
<dbReference type="KEGG" id="ssc:100522363"/>
<dbReference type="CTD" id="566"/>
<dbReference type="VGNC" id="VGNC:85714">
    <property type="gene designation" value="AZU1"/>
</dbReference>
<dbReference type="eggNOG" id="KOG3627">
    <property type="taxonomic scope" value="Eukaryota"/>
</dbReference>
<dbReference type="GeneTree" id="ENSGT01030000234551"/>
<dbReference type="HOGENOM" id="CLU_006842_1_0_1"/>
<dbReference type="InParanoid" id="P80015"/>
<dbReference type="OMA" id="TAYRSWI"/>
<dbReference type="OrthoDB" id="8440449at2759"/>
<dbReference type="TreeFam" id="TF335284"/>
<dbReference type="Reactome" id="R-SSC-6798695">
    <property type="pathway name" value="Neutrophil degranulation"/>
</dbReference>
<dbReference type="Proteomes" id="UP000008227">
    <property type="component" value="Chromosome 2"/>
</dbReference>
<dbReference type="Proteomes" id="UP000314985">
    <property type="component" value="Chromosome 2"/>
</dbReference>
<dbReference type="Proteomes" id="UP000694570">
    <property type="component" value="Unplaced"/>
</dbReference>
<dbReference type="Proteomes" id="UP000694571">
    <property type="component" value="Unplaced"/>
</dbReference>
<dbReference type="Proteomes" id="UP000694720">
    <property type="component" value="Unplaced"/>
</dbReference>
<dbReference type="Proteomes" id="UP000694722">
    <property type="component" value="Unplaced"/>
</dbReference>
<dbReference type="Proteomes" id="UP000694723">
    <property type="component" value="Unplaced"/>
</dbReference>
<dbReference type="Proteomes" id="UP000694724">
    <property type="component" value="Unplaced"/>
</dbReference>
<dbReference type="Proteomes" id="UP000694725">
    <property type="component" value="Unplaced"/>
</dbReference>
<dbReference type="Proteomes" id="UP000694726">
    <property type="component" value="Unplaced"/>
</dbReference>
<dbReference type="Proteomes" id="UP000694727">
    <property type="component" value="Unplaced"/>
</dbReference>
<dbReference type="Proteomes" id="UP000694728">
    <property type="component" value="Unplaced"/>
</dbReference>
<dbReference type="Bgee" id="ENSSSCG00000013415">
    <property type="expression patterns" value="Expressed in blood and 8 other cell types or tissues"/>
</dbReference>
<dbReference type="GO" id="GO:0042582">
    <property type="term" value="C:azurophil granule"/>
    <property type="evidence" value="ECO:0000250"/>
    <property type="project" value="UniProtKB"/>
</dbReference>
<dbReference type="GO" id="GO:0035577">
    <property type="term" value="C:azurophil granule membrane"/>
    <property type="evidence" value="ECO:0007669"/>
    <property type="project" value="Ensembl"/>
</dbReference>
<dbReference type="GO" id="GO:0005615">
    <property type="term" value="C:extracellular space"/>
    <property type="evidence" value="ECO:0000318"/>
    <property type="project" value="GO_Central"/>
</dbReference>
<dbReference type="GO" id="GO:0043395">
    <property type="term" value="F:heparan sulfate proteoglycan binding"/>
    <property type="evidence" value="ECO:0007669"/>
    <property type="project" value="Ensembl"/>
</dbReference>
<dbReference type="GO" id="GO:0008201">
    <property type="term" value="F:heparin binding"/>
    <property type="evidence" value="ECO:0007669"/>
    <property type="project" value="UniProtKB-KW"/>
</dbReference>
<dbReference type="GO" id="GO:0004252">
    <property type="term" value="F:serine-type endopeptidase activity"/>
    <property type="evidence" value="ECO:0000318"/>
    <property type="project" value="GO_Central"/>
</dbReference>
<dbReference type="GO" id="GO:0019730">
    <property type="term" value="P:antimicrobial humoral response"/>
    <property type="evidence" value="ECO:0007669"/>
    <property type="project" value="Ensembl"/>
</dbReference>
<dbReference type="GO" id="GO:0060326">
    <property type="term" value="P:cell chemotaxis"/>
    <property type="evidence" value="ECO:0007669"/>
    <property type="project" value="Ensembl"/>
</dbReference>
<dbReference type="GO" id="GO:0051607">
    <property type="term" value="P:defense response to virus"/>
    <property type="evidence" value="ECO:0007669"/>
    <property type="project" value="Ensembl"/>
</dbReference>
<dbReference type="GO" id="GO:0008347">
    <property type="term" value="P:glial cell migration"/>
    <property type="evidence" value="ECO:0000250"/>
    <property type="project" value="UniProtKB"/>
</dbReference>
<dbReference type="GO" id="GO:0035556">
    <property type="term" value="P:intracellular signal transduction"/>
    <property type="evidence" value="ECO:0007669"/>
    <property type="project" value="Ensembl"/>
</dbReference>
<dbReference type="GO" id="GO:0001774">
    <property type="term" value="P:microglial cell activation"/>
    <property type="evidence" value="ECO:0000250"/>
    <property type="project" value="UniProtKB"/>
</dbReference>
<dbReference type="GO" id="GO:0035696">
    <property type="term" value="P:monocyte extravasation"/>
    <property type="evidence" value="ECO:0007669"/>
    <property type="project" value="Ensembl"/>
</dbReference>
<dbReference type="GO" id="GO:0070944">
    <property type="term" value="P:neutrophil-mediated killing of bacterium"/>
    <property type="evidence" value="ECO:0007669"/>
    <property type="project" value="Ensembl"/>
</dbReference>
<dbReference type="GO" id="GO:0045785">
    <property type="term" value="P:positive regulation of cell adhesion"/>
    <property type="evidence" value="ECO:0000250"/>
    <property type="project" value="UniProtKB"/>
</dbReference>
<dbReference type="GO" id="GO:0032724">
    <property type="term" value="P:positive regulation of fractalkine production"/>
    <property type="evidence" value="ECO:0000250"/>
    <property type="project" value="UniProtKB"/>
</dbReference>
<dbReference type="GO" id="GO:0032731">
    <property type="term" value="P:positive regulation of interleukin-1 beta production"/>
    <property type="evidence" value="ECO:0000250"/>
    <property type="project" value="UniProtKB"/>
</dbReference>
<dbReference type="GO" id="GO:0045348">
    <property type="term" value="P:positive regulation of MHC class II biosynthetic process"/>
    <property type="evidence" value="ECO:0000250"/>
    <property type="project" value="UniProtKB"/>
</dbReference>
<dbReference type="GO" id="GO:0050766">
    <property type="term" value="P:positive regulation of phagocytosis"/>
    <property type="evidence" value="ECO:0000250"/>
    <property type="project" value="UniProtKB"/>
</dbReference>
<dbReference type="GO" id="GO:0032760">
    <property type="term" value="P:positive regulation of tumor necrosis factor production"/>
    <property type="evidence" value="ECO:0000250"/>
    <property type="project" value="UniProtKB"/>
</dbReference>
<dbReference type="GO" id="GO:0051604">
    <property type="term" value="P:protein maturation"/>
    <property type="evidence" value="ECO:0000318"/>
    <property type="project" value="GO_Central"/>
</dbReference>
<dbReference type="GO" id="GO:0006508">
    <property type="term" value="P:proteolysis"/>
    <property type="evidence" value="ECO:0007669"/>
    <property type="project" value="Ensembl"/>
</dbReference>
<dbReference type="CDD" id="cd00190">
    <property type="entry name" value="Tryp_SPc"/>
    <property type="match status" value="1"/>
</dbReference>
<dbReference type="FunFam" id="2.40.10.10:FF:000475">
    <property type="entry name" value="Azurocidin"/>
    <property type="match status" value="1"/>
</dbReference>
<dbReference type="Gene3D" id="2.40.10.10">
    <property type="entry name" value="Trypsin-like serine proteases"/>
    <property type="match status" value="2"/>
</dbReference>
<dbReference type="InterPro" id="IPR009003">
    <property type="entry name" value="Peptidase_S1_PA"/>
</dbReference>
<dbReference type="InterPro" id="IPR043504">
    <property type="entry name" value="Peptidase_S1_PA_chymotrypsin"/>
</dbReference>
<dbReference type="InterPro" id="IPR001314">
    <property type="entry name" value="Peptidase_S1A"/>
</dbReference>
<dbReference type="InterPro" id="IPR001254">
    <property type="entry name" value="Trypsin_dom"/>
</dbReference>
<dbReference type="PANTHER" id="PTHR24271:SF10">
    <property type="entry name" value="AZUROCIDIN"/>
    <property type="match status" value="1"/>
</dbReference>
<dbReference type="PANTHER" id="PTHR24271">
    <property type="entry name" value="KALLIKREIN-RELATED"/>
    <property type="match status" value="1"/>
</dbReference>
<dbReference type="Pfam" id="PF00089">
    <property type="entry name" value="Trypsin"/>
    <property type="match status" value="1"/>
</dbReference>
<dbReference type="PRINTS" id="PR00722">
    <property type="entry name" value="CHYMOTRYPSIN"/>
</dbReference>
<dbReference type="SMART" id="SM00020">
    <property type="entry name" value="Tryp_SPc"/>
    <property type="match status" value="1"/>
</dbReference>
<dbReference type="SUPFAM" id="SSF50494">
    <property type="entry name" value="Trypsin-like serine proteases"/>
    <property type="match status" value="1"/>
</dbReference>
<dbReference type="PROSITE" id="PS50240">
    <property type="entry name" value="TRYPSIN_DOM"/>
    <property type="match status" value="1"/>
</dbReference>
<proteinExistence type="evidence at protein level"/>
<organism>
    <name type="scientific">Sus scrofa</name>
    <name type="common">Pig</name>
    <dbReference type="NCBI Taxonomy" id="9823"/>
    <lineage>
        <taxon>Eukaryota</taxon>
        <taxon>Metazoa</taxon>
        <taxon>Chordata</taxon>
        <taxon>Craniata</taxon>
        <taxon>Vertebrata</taxon>
        <taxon>Euteleostomi</taxon>
        <taxon>Mammalia</taxon>
        <taxon>Eutheria</taxon>
        <taxon>Laurasiatheria</taxon>
        <taxon>Artiodactyla</taxon>
        <taxon>Suina</taxon>
        <taxon>Suidae</taxon>
        <taxon>Sus</taxon>
    </lineage>
</organism>
<accession>P80015</accession>